<protein>
    <recommendedName>
        <fullName evidence="1">H(+)/Cl(-) exchange transporter ClcA</fullName>
    </recommendedName>
</protein>
<gene>
    <name evidence="1" type="primary">clcA</name>
    <name evidence="1" type="synonym">eriC</name>
    <name type="ordered locus">EcolC_3504</name>
</gene>
<sequence length="473" mass="50349">MKTDTPSLETPQAARLRRRQLIRQLLERDKTPLAILFMAAVVGTLVGLAAVAFDKGVAWLQNQRMGALVHTADNYPLLLTVAFLCSAVLAMFGYFLVRKYAPEAGGSGIPEIEGALEDQRPVRWWRVLPVKFFGGLGTLGGGMVLGREGPTVQIGGNIGRMVLDIFRLKGDEARHTLLATGAAAGLAAAFNAPLAGILFIIEEMRPQFRYTLISIKAVFIGVIMSTIMYRIFNHEVALIDVGKLSDAPLNTLWLYLILGIIFGIFGPIFNKWVLGMQDLLHRVHGGNITKWVLMGGAIGGLCGLLGFVAPATSGGGFNLIPIATAGNFSMGMLVFIFVARVITTLLCFSSGAPGGIFAPMLALGTVLGTAFGMVAVELFPQYHLEAGTFAIAGMGALLAASIRAPLTGIILVLEMTDNYQLILPMIITGLGATLLAQFTGGKPLYSAILARTLAKQEAEQLARSKAASASENT</sequence>
<name>CLCA_ECOLC</name>
<feature type="chain" id="PRO_1000085018" description="H(+)/Cl(-) exchange transporter ClcA">
    <location>
        <begin position="1"/>
        <end position="473"/>
    </location>
</feature>
<feature type="topological domain" description="Cytoplasmic" evidence="1">
    <location>
        <begin position="1"/>
        <end position="32"/>
    </location>
</feature>
<feature type="transmembrane region" description="Helical" evidence="1">
    <location>
        <begin position="33"/>
        <end position="69"/>
    </location>
</feature>
<feature type="topological domain" description="Periplasmic" evidence="1">
    <location>
        <begin position="70"/>
        <end position="76"/>
    </location>
</feature>
<feature type="transmembrane region" description="Helical" evidence="1">
    <location>
        <begin position="77"/>
        <end position="100"/>
    </location>
</feature>
<feature type="intramembrane region" description="Helical" evidence="1">
    <location>
        <begin position="109"/>
        <end position="116"/>
    </location>
</feature>
<feature type="topological domain" description="Cytoplasmic" evidence="1">
    <location>
        <begin position="117"/>
        <end position="123"/>
    </location>
</feature>
<feature type="transmembrane region" description="Helical" evidence="1">
    <location>
        <begin position="124"/>
        <end position="141"/>
    </location>
</feature>
<feature type="transmembrane region" description="Helical" evidence="1">
    <location>
        <begin position="148"/>
        <end position="166"/>
    </location>
</feature>
<feature type="topological domain" description="Cytoplasmic" evidence="1">
    <location>
        <begin position="167"/>
        <end position="176"/>
    </location>
</feature>
<feature type="intramembrane region" description="Helical" evidence="1">
    <location>
        <begin position="177"/>
        <end position="189"/>
    </location>
</feature>
<feature type="intramembrane region" description="Helical" evidence="1">
    <location>
        <begin position="193"/>
        <end position="201"/>
    </location>
</feature>
<feature type="topological domain" description="Cytoplasmic" evidence="1">
    <location>
        <begin position="202"/>
        <end position="214"/>
    </location>
</feature>
<feature type="transmembrane region" description="Helical" evidence="1">
    <location>
        <begin position="215"/>
        <end position="232"/>
    </location>
</feature>
<feature type="topological domain" description="Periplasmic" evidence="1">
    <location>
        <begin position="233"/>
        <end position="252"/>
    </location>
</feature>
<feature type="transmembrane region" description="Helical" evidence="1">
    <location>
        <begin position="253"/>
        <end position="281"/>
    </location>
</feature>
<feature type="topological domain" description="Cytoplasmic" evidence="1">
    <location>
        <begin position="282"/>
        <end position="287"/>
    </location>
</feature>
<feature type="transmembrane region" description="Helical" evidence="1">
    <location>
        <begin position="288"/>
        <end position="309"/>
    </location>
</feature>
<feature type="topological domain" description="Periplasmic" evidence="1">
    <location>
        <begin position="310"/>
        <end position="329"/>
    </location>
</feature>
<feature type="transmembrane region" description="Helical" evidence="1">
    <location>
        <begin position="330"/>
        <end position="349"/>
    </location>
</feature>
<feature type="transmembrane region" description="Helical" evidence="1">
    <location>
        <begin position="355"/>
        <end position="376"/>
    </location>
</feature>
<feature type="topological domain" description="Periplasmic" evidence="1">
    <location>
        <begin position="377"/>
        <end position="386"/>
    </location>
</feature>
<feature type="intramembrane region" description="Helical" evidence="1">
    <location>
        <begin position="387"/>
        <end position="401"/>
    </location>
</feature>
<feature type="intramembrane region" description="Note=Loop between two helices" evidence="1">
    <location>
        <begin position="402"/>
        <end position="404"/>
    </location>
</feature>
<feature type="intramembrane region" description="Helical" evidence="1">
    <location>
        <begin position="405"/>
        <end position="416"/>
    </location>
</feature>
<feature type="intramembrane region" description="Note=Loop between two helices" evidence="1">
    <location>
        <begin position="417"/>
        <end position="421"/>
    </location>
</feature>
<feature type="transmembrane region" description="Helical" evidence="1">
    <location>
        <begin position="422"/>
        <end position="438"/>
    </location>
</feature>
<feature type="topological domain" description="Cytoplasmic" evidence="1">
    <location>
        <begin position="439"/>
        <end position="473"/>
    </location>
</feature>
<feature type="short sequence motif" description="Selectivity filter part_1" evidence="1">
    <location>
        <begin position="106"/>
        <end position="110"/>
    </location>
</feature>
<feature type="short sequence motif" description="Selectivity filter part_2" evidence="1">
    <location>
        <begin position="146"/>
        <end position="150"/>
    </location>
</feature>
<feature type="short sequence motif" description="Selectivity filter part_3" evidence="1">
    <location>
        <begin position="355"/>
        <end position="359"/>
    </location>
</feature>
<feature type="binding site" evidence="1">
    <location>
        <position position="107"/>
    </location>
    <ligand>
        <name>chloride</name>
        <dbReference type="ChEBI" id="CHEBI:17996"/>
    </ligand>
</feature>
<feature type="binding site" evidence="1">
    <location>
        <position position="356"/>
    </location>
    <ligand>
        <name>chloride</name>
        <dbReference type="ChEBI" id="CHEBI:17996"/>
    </ligand>
</feature>
<feature type="binding site" evidence="1">
    <location>
        <position position="357"/>
    </location>
    <ligand>
        <name>chloride</name>
        <dbReference type="ChEBI" id="CHEBI:17996"/>
    </ligand>
</feature>
<feature type="binding site" evidence="1">
    <location>
        <position position="445"/>
    </location>
    <ligand>
        <name>chloride</name>
        <dbReference type="ChEBI" id="CHEBI:17996"/>
    </ligand>
</feature>
<feature type="site" description="Mediates proton transfer from the outer aqueous phase to the interior of the protein; involved in linking H(+) and Cl(-) transport" evidence="1">
    <location>
        <position position="148"/>
    </location>
</feature>
<feature type="site" description="Mediates proton transfer from the protein to the inner aqueous phase" evidence="1">
    <location>
        <position position="203"/>
    </location>
</feature>
<comment type="function">
    <text evidence="1">Proton-coupled chloride transporter. Functions as antiport system and exchanges two chloride ions for 1 proton. Probably acts as an electrical shunt for an outwardly-directed proton pump that is linked to amino acid decarboxylation, as part of the extreme acid resistance (XAR) response.</text>
</comment>
<comment type="catalytic activity">
    <reaction evidence="1">
        <text>2 chloride(in) + H(+)(out) = 2 chloride(out) + H(+)(in)</text>
        <dbReference type="Rhea" id="RHEA:29567"/>
        <dbReference type="ChEBI" id="CHEBI:15378"/>
        <dbReference type="ChEBI" id="CHEBI:17996"/>
    </reaction>
</comment>
<comment type="subunit">
    <text evidence="1">Homodimer.</text>
</comment>
<comment type="subcellular location">
    <subcellularLocation>
        <location evidence="1">Cell inner membrane</location>
        <topology evidence="1">Multi-pass membrane protein</topology>
    </subcellularLocation>
</comment>
<comment type="similarity">
    <text evidence="1">Belongs to the chloride channel (TC 2.A.49) family. ClcA subfamily.</text>
</comment>
<evidence type="ECO:0000255" key="1">
    <source>
        <dbReference type="HAMAP-Rule" id="MF_01128"/>
    </source>
</evidence>
<dbReference type="EMBL" id="CP000946">
    <property type="protein sequence ID" value="ACA79118.1"/>
    <property type="molecule type" value="Genomic_DNA"/>
</dbReference>
<dbReference type="RefSeq" id="WP_000845394.1">
    <property type="nucleotide sequence ID" value="NZ_MTFT01000035.1"/>
</dbReference>
<dbReference type="SMR" id="B1IQI5"/>
<dbReference type="GeneID" id="93777272"/>
<dbReference type="KEGG" id="ecl:EcolC_3504"/>
<dbReference type="HOGENOM" id="CLU_015263_7_0_6"/>
<dbReference type="GO" id="GO:0005886">
    <property type="term" value="C:plasma membrane"/>
    <property type="evidence" value="ECO:0007669"/>
    <property type="project" value="UniProtKB-SubCell"/>
</dbReference>
<dbReference type="GO" id="GO:0015297">
    <property type="term" value="F:antiporter activity"/>
    <property type="evidence" value="ECO:0007669"/>
    <property type="project" value="UniProtKB-UniRule"/>
</dbReference>
<dbReference type="GO" id="GO:0005247">
    <property type="term" value="F:voltage-gated chloride channel activity"/>
    <property type="evidence" value="ECO:0007669"/>
    <property type="project" value="TreeGrafter"/>
</dbReference>
<dbReference type="CDD" id="cd01031">
    <property type="entry name" value="EriC"/>
    <property type="match status" value="1"/>
</dbReference>
<dbReference type="FunFam" id="1.10.3080.10:FF:000005">
    <property type="entry name" value="H(+)/Cl(-) exchange transporter ClcA"/>
    <property type="match status" value="1"/>
</dbReference>
<dbReference type="Gene3D" id="1.10.3080.10">
    <property type="entry name" value="Clc chloride channel"/>
    <property type="match status" value="1"/>
</dbReference>
<dbReference type="HAMAP" id="MF_01128">
    <property type="entry name" value="CLC_ClcA"/>
    <property type="match status" value="1"/>
</dbReference>
<dbReference type="InterPro" id="IPR023861">
    <property type="entry name" value="Cl-channel_ClcA"/>
</dbReference>
<dbReference type="InterPro" id="IPR014743">
    <property type="entry name" value="Cl-channel_core"/>
</dbReference>
<dbReference type="InterPro" id="IPR001807">
    <property type="entry name" value="ClC"/>
</dbReference>
<dbReference type="NCBIfam" id="NF003640">
    <property type="entry name" value="PRK05277.1"/>
    <property type="match status" value="1"/>
</dbReference>
<dbReference type="PANTHER" id="PTHR45711">
    <property type="entry name" value="CHLORIDE CHANNEL PROTEIN"/>
    <property type="match status" value="1"/>
</dbReference>
<dbReference type="PANTHER" id="PTHR45711:SF6">
    <property type="entry name" value="CHLORIDE CHANNEL PROTEIN"/>
    <property type="match status" value="1"/>
</dbReference>
<dbReference type="Pfam" id="PF00654">
    <property type="entry name" value="Voltage_CLC"/>
    <property type="match status" value="1"/>
</dbReference>
<dbReference type="PRINTS" id="PR00762">
    <property type="entry name" value="CLCHANNEL"/>
</dbReference>
<dbReference type="SUPFAM" id="SSF81340">
    <property type="entry name" value="Clc chloride channel"/>
    <property type="match status" value="1"/>
</dbReference>
<organism>
    <name type="scientific">Escherichia coli (strain ATCC 8739 / DSM 1576 / NBRC 3972 / NCIMB 8545 / WDCM 00012 / Crooks)</name>
    <dbReference type="NCBI Taxonomy" id="481805"/>
    <lineage>
        <taxon>Bacteria</taxon>
        <taxon>Pseudomonadati</taxon>
        <taxon>Pseudomonadota</taxon>
        <taxon>Gammaproteobacteria</taxon>
        <taxon>Enterobacterales</taxon>
        <taxon>Enterobacteriaceae</taxon>
        <taxon>Escherichia</taxon>
    </lineage>
</organism>
<keyword id="KW-0050">Antiport</keyword>
<keyword id="KW-0997">Cell inner membrane</keyword>
<keyword id="KW-1003">Cell membrane</keyword>
<keyword id="KW-0868">Chloride</keyword>
<keyword id="KW-0406">Ion transport</keyword>
<keyword id="KW-0472">Membrane</keyword>
<keyword id="KW-0812">Transmembrane</keyword>
<keyword id="KW-1133">Transmembrane helix</keyword>
<keyword id="KW-0813">Transport</keyword>
<proteinExistence type="inferred from homology"/>
<accession>B1IQI5</accession>
<reference key="1">
    <citation type="submission" date="2008-02" db="EMBL/GenBank/DDBJ databases">
        <title>Complete sequence of Escherichia coli C str. ATCC 8739.</title>
        <authorList>
            <person name="Copeland A."/>
            <person name="Lucas S."/>
            <person name="Lapidus A."/>
            <person name="Glavina del Rio T."/>
            <person name="Dalin E."/>
            <person name="Tice H."/>
            <person name="Bruce D."/>
            <person name="Goodwin L."/>
            <person name="Pitluck S."/>
            <person name="Kiss H."/>
            <person name="Brettin T."/>
            <person name="Detter J.C."/>
            <person name="Han C."/>
            <person name="Kuske C.R."/>
            <person name="Schmutz J."/>
            <person name="Larimer F."/>
            <person name="Land M."/>
            <person name="Hauser L."/>
            <person name="Kyrpides N."/>
            <person name="Mikhailova N."/>
            <person name="Ingram L."/>
            <person name="Richardson P."/>
        </authorList>
    </citation>
    <scope>NUCLEOTIDE SEQUENCE [LARGE SCALE GENOMIC DNA]</scope>
    <source>
        <strain>ATCC 8739 / DSM 1576 / NBRC 3972 / NCIMB 8545 / WDCM 00012 / Crooks</strain>
    </source>
</reference>